<gene>
    <name evidence="1" type="primary">sotB</name>
    <name type="ordered locus">PSPPH_0900</name>
</gene>
<feature type="chain" id="PRO_0000259253" description="Probable sugar efflux transporter">
    <location>
        <begin position="1"/>
        <end position="402"/>
    </location>
</feature>
<feature type="transmembrane region" description="Helical" evidence="1">
    <location>
        <begin position="14"/>
        <end position="34"/>
    </location>
</feature>
<feature type="transmembrane region" description="Helical" evidence="1">
    <location>
        <begin position="51"/>
        <end position="71"/>
    </location>
</feature>
<feature type="transmembrane region" description="Helical" evidence="1">
    <location>
        <begin position="84"/>
        <end position="104"/>
    </location>
</feature>
<feature type="transmembrane region" description="Helical" evidence="1">
    <location>
        <begin position="110"/>
        <end position="130"/>
    </location>
</feature>
<feature type="transmembrane region" description="Helical" evidence="1">
    <location>
        <begin position="137"/>
        <end position="157"/>
    </location>
</feature>
<feature type="transmembrane region" description="Helical" evidence="1">
    <location>
        <begin position="171"/>
        <end position="191"/>
    </location>
</feature>
<feature type="transmembrane region" description="Helical" evidence="1">
    <location>
        <begin position="213"/>
        <end position="233"/>
    </location>
</feature>
<feature type="transmembrane region" description="Helical" evidence="1">
    <location>
        <begin position="249"/>
        <end position="269"/>
    </location>
</feature>
<feature type="transmembrane region" description="Helical" evidence="1">
    <location>
        <begin position="276"/>
        <end position="296"/>
    </location>
</feature>
<feature type="transmembrane region" description="Helical" evidence="1">
    <location>
        <begin position="300"/>
        <end position="320"/>
    </location>
</feature>
<feature type="transmembrane region" description="Helical" evidence="1">
    <location>
        <begin position="334"/>
        <end position="354"/>
    </location>
</feature>
<feature type="transmembrane region" description="Helical" evidence="1">
    <location>
        <begin position="361"/>
        <end position="381"/>
    </location>
</feature>
<dbReference type="EMBL" id="CP000058">
    <property type="protein sequence ID" value="AAZ36980.1"/>
    <property type="status" value="ALT_INIT"/>
    <property type="molecule type" value="Genomic_DNA"/>
</dbReference>
<dbReference type="RefSeq" id="WP_041924731.1">
    <property type="nucleotide sequence ID" value="NC_005773.3"/>
</dbReference>
<dbReference type="SMR" id="Q48N46"/>
<dbReference type="KEGG" id="psp:PSPPH_0900"/>
<dbReference type="eggNOG" id="COG2814">
    <property type="taxonomic scope" value="Bacteria"/>
</dbReference>
<dbReference type="HOGENOM" id="CLU_001265_61_2_6"/>
<dbReference type="Proteomes" id="UP000000551">
    <property type="component" value="Chromosome"/>
</dbReference>
<dbReference type="GO" id="GO:0005886">
    <property type="term" value="C:plasma membrane"/>
    <property type="evidence" value="ECO:0007669"/>
    <property type="project" value="UniProtKB-SubCell"/>
</dbReference>
<dbReference type="GO" id="GO:0015144">
    <property type="term" value="F:carbohydrate transmembrane transporter activity"/>
    <property type="evidence" value="ECO:0007669"/>
    <property type="project" value="UniProtKB-UniRule"/>
</dbReference>
<dbReference type="CDD" id="cd17324">
    <property type="entry name" value="MFS_NepI_like"/>
    <property type="match status" value="1"/>
</dbReference>
<dbReference type="Gene3D" id="1.20.1250.20">
    <property type="entry name" value="MFS general substrate transporter like domains"/>
    <property type="match status" value="1"/>
</dbReference>
<dbReference type="HAMAP" id="MF_00517">
    <property type="entry name" value="MFS_SotB"/>
    <property type="match status" value="1"/>
</dbReference>
<dbReference type="InterPro" id="IPR011701">
    <property type="entry name" value="MFS"/>
</dbReference>
<dbReference type="InterPro" id="IPR020846">
    <property type="entry name" value="MFS_dom"/>
</dbReference>
<dbReference type="InterPro" id="IPR050189">
    <property type="entry name" value="MFS_Efflux_Transporters"/>
</dbReference>
<dbReference type="InterPro" id="IPR036259">
    <property type="entry name" value="MFS_trans_sf"/>
</dbReference>
<dbReference type="InterPro" id="IPR023495">
    <property type="entry name" value="Sugar_effux_transptr_put"/>
</dbReference>
<dbReference type="NCBIfam" id="NF002921">
    <property type="entry name" value="PRK03545.1"/>
    <property type="match status" value="1"/>
</dbReference>
<dbReference type="PANTHER" id="PTHR43124">
    <property type="entry name" value="PURINE EFFLUX PUMP PBUE"/>
    <property type="match status" value="1"/>
</dbReference>
<dbReference type="PANTHER" id="PTHR43124:SF4">
    <property type="entry name" value="SUGAR EFFLUX TRANSPORTER"/>
    <property type="match status" value="1"/>
</dbReference>
<dbReference type="Pfam" id="PF07690">
    <property type="entry name" value="MFS_1"/>
    <property type="match status" value="1"/>
</dbReference>
<dbReference type="SUPFAM" id="SSF103473">
    <property type="entry name" value="MFS general substrate transporter"/>
    <property type="match status" value="1"/>
</dbReference>
<dbReference type="PROSITE" id="PS50850">
    <property type="entry name" value="MFS"/>
    <property type="match status" value="1"/>
</dbReference>
<reference key="1">
    <citation type="journal article" date="2005" name="J. Bacteriol.">
        <title>Whole-genome sequence analysis of Pseudomonas syringae pv. phaseolicola 1448A reveals divergence among pathovars in genes involved in virulence and transposition.</title>
        <authorList>
            <person name="Joardar V."/>
            <person name="Lindeberg M."/>
            <person name="Jackson R.W."/>
            <person name="Selengut J."/>
            <person name="Dodson R."/>
            <person name="Brinkac L.M."/>
            <person name="Daugherty S.C."/>
            <person name="DeBoy R.T."/>
            <person name="Durkin A.S."/>
            <person name="Gwinn Giglio M."/>
            <person name="Madupu R."/>
            <person name="Nelson W.C."/>
            <person name="Rosovitz M.J."/>
            <person name="Sullivan S.A."/>
            <person name="Crabtree J."/>
            <person name="Creasy T."/>
            <person name="Davidsen T.M."/>
            <person name="Haft D.H."/>
            <person name="Zafar N."/>
            <person name="Zhou L."/>
            <person name="Halpin R."/>
            <person name="Holley T."/>
            <person name="Khouri H.M."/>
            <person name="Feldblyum T.V."/>
            <person name="White O."/>
            <person name="Fraser C.M."/>
            <person name="Chatterjee A.K."/>
            <person name="Cartinhour S."/>
            <person name="Schneider D."/>
            <person name="Mansfield J.W."/>
            <person name="Collmer A."/>
            <person name="Buell R."/>
        </authorList>
    </citation>
    <scope>NUCLEOTIDE SEQUENCE [LARGE SCALE GENOMIC DNA]</scope>
    <source>
        <strain>1448A / Race 6</strain>
    </source>
</reference>
<accession>Q48N46</accession>
<sequence>MITSPPNEQAGSWLGVFALALAAFIFNTTEFVPIGLLSNIGQSFEMTPAQVGLMLTIYAWVVSLMSLPMMLATRNIERRKLLMFVFGLFVVSHVLSAISPSFAILLVSRVGIAFAHAVFWSVTASLAVRIAPPGKQVQALGLLATGTSLAMVLGIPLGRVLGEALGWRTTFLGIAGIAALVVFLLARALPLLPSQNSGSLRSLPILFKRPRLMAIYLLTAIVVTAHFTAYSYIEPFTQTVSRLSGEMTTILLLVFGGAGIMGSIIFSLFSDRFPNGLLITAIGTLTVCLLMLLPLSGDATALGTLTIIWGMAIMCFGLTLQARVLSLAPDATDVAMALFSGIFNIGIGGGALLGSVVSSHLGVANVGIVGGLLALGGLGLCCFTTHYFGKIQPAAEVQAESK</sequence>
<name>SOTB_PSE14</name>
<proteinExistence type="inferred from homology"/>
<comment type="function">
    <text evidence="1">Involved in the efflux of sugars. The physiological role may be the reduction of the intracellular concentration of toxic sugars or sugar metabolites.</text>
</comment>
<comment type="subcellular location">
    <subcellularLocation>
        <location evidence="1">Cell inner membrane</location>
        <topology evidence="1">Multi-pass membrane protein</topology>
    </subcellularLocation>
</comment>
<comment type="similarity">
    <text evidence="1">Belongs to the major facilitator superfamily. SotB (TC 2.A.1.2) family.</text>
</comment>
<comment type="sequence caution" evidence="2">
    <conflict type="erroneous initiation">
        <sequence resource="EMBL-CDS" id="AAZ36980"/>
    </conflict>
</comment>
<keyword id="KW-0997">Cell inner membrane</keyword>
<keyword id="KW-1003">Cell membrane</keyword>
<keyword id="KW-0472">Membrane</keyword>
<keyword id="KW-0762">Sugar transport</keyword>
<keyword id="KW-0812">Transmembrane</keyword>
<keyword id="KW-1133">Transmembrane helix</keyword>
<keyword id="KW-0813">Transport</keyword>
<organism>
    <name type="scientific">Pseudomonas savastanoi pv. phaseolicola (strain 1448A / Race 6)</name>
    <name type="common">Pseudomonas syringae pv. phaseolicola (strain 1448A / Race 6)</name>
    <dbReference type="NCBI Taxonomy" id="264730"/>
    <lineage>
        <taxon>Bacteria</taxon>
        <taxon>Pseudomonadati</taxon>
        <taxon>Pseudomonadota</taxon>
        <taxon>Gammaproteobacteria</taxon>
        <taxon>Pseudomonadales</taxon>
        <taxon>Pseudomonadaceae</taxon>
        <taxon>Pseudomonas</taxon>
    </lineage>
</organism>
<evidence type="ECO:0000255" key="1">
    <source>
        <dbReference type="HAMAP-Rule" id="MF_00517"/>
    </source>
</evidence>
<evidence type="ECO:0000305" key="2"/>
<protein>
    <recommendedName>
        <fullName evidence="1">Probable sugar efflux transporter</fullName>
    </recommendedName>
</protein>